<name>PROB_METBU</name>
<feature type="chain" id="PRO_0000253016" description="Glutamate 5-kinase">
    <location>
        <begin position="1"/>
        <end position="375"/>
    </location>
</feature>
<feature type="domain" description="PUA" evidence="1">
    <location>
        <begin position="284"/>
        <end position="360"/>
    </location>
</feature>
<feature type="binding site" evidence="1">
    <location>
        <position position="17"/>
    </location>
    <ligand>
        <name>ATP</name>
        <dbReference type="ChEBI" id="CHEBI:30616"/>
    </ligand>
</feature>
<feature type="binding site" evidence="1">
    <location>
        <position position="57"/>
    </location>
    <ligand>
        <name>substrate</name>
    </ligand>
</feature>
<feature type="binding site" evidence="1">
    <location>
        <position position="144"/>
    </location>
    <ligand>
        <name>substrate</name>
    </ligand>
</feature>
<feature type="binding site" evidence="1">
    <location>
        <position position="158"/>
    </location>
    <ligand>
        <name>substrate</name>
    </ligand>
</feature>
<feature type="binding site" evidence="1">
    <location>
        <begin position="178"/>
        <end position="179"/>
    </location>
    <ligand>
        <name>ATP</name>
        <dbReference type="ChEBI" id="CHEBI:30616"/>
    </ligand>
</feature>
<gene>
    <name evidence="1" type="primary">proB</name>
    <name type="ordered locus">Mbur_2415</name>
</gene>
<accession>Q12TG0</accession>
<comment type="function">
    <text evidence="1">Catalyzes the transfer of a phosphate group to glutamate to form L-glutamate 5-phosphate.</text>
</comment>
<comment type="catalytic activity">
    <reaction evidence="1">
        <text>L-glutamate + ATP = L-glutamyl 5-phosphate + ADP</text>
        <dbReference type="Rhea" id="RHEA:14877"/>
        <dbReference type="ChEBI" id="CHEBI:29985"/>
        <dbReference type="ChEBI" id="CHEBI:30616"/>
        <dbReference type="ChEBI" id="CHEBI:58274"/>
        <dbReference type="ChEBI" id="CHEBI:456216"/>
        <dbReference type="EC" id="2.7.2.11"/>
    </reaction>
</comment>
<comment type="pathway">
    <text evidence="1">Amino-acid biosynthesis; L-proline biosynthesis; L-glutamate 5-semialdehyde from L-glutamate: step 1/2.</text>
</comment>
<comment type="subcellular location">
    <subcellularLocation>
        <location evidence="1">Cytoplasm</location>
    </subcellularLocation>
</comment>
<comment type="similarity">
    <text evidence="1">Belongs to the glutamate 5-kinase family.</text>
</comment>
<organism>
    <name type="scientific">Methanococcoides burtonii (strain DSM 6242 / NBRC 107633 / OCM 468 / ACE-M)</name>
    <dbReference type="NCBI Taxonomy" id="259564"/>
    <lineage>
        <taxon>Archaea</taxon>
        <taxon>Methanobacteriati</taxon>
        <taxon>Methanobacteriota</taxon>
        <taxon>Stenosarchaea group</taxon>
        <taxon>Methanomicrobia</taxon>
        <taxon>Methanosarcinales</taxon>
        <taxon>Methanosarcinaceae</taxon>
        <taxon>Methanococcoides</taxon>
    </lineage>
</organism>
<protein>
    <recommendedName>
        <fullName evidence="1">Glutamate 5-kinase</fullName>
        <ecNumber evidence="1">2.7.2.11</ecNumber>
    </recommendedName>
    <alternativeName>
        <fullName evidence="1">Gamma-glutamyl kinase</fullName>
        <shortName evidence="1">GK</shortName>
    </alternativeName>
</protein>
<reference key="1">
    <citation type="journal article" date="2009" name="ISME J.">
        <title>The genome sequence of the psychrophilic archaeon, Methanococcoides burtonii: the role of genome evolution in cold adaptation.</title>
        <authorList>
            <person name="Allen M.A."/>
            <person name="Lauro F.M."/>
            <person name="Williams T.J."/>
            <person name="Burg D."/>
            <person name="Siddiqui K.S."/>
            <person name="De Francisci D."/>
            <person name="Chong K.W."/>
            <person name="Pilak O."/>
            <person name="Chew H.H."/>
            <person name="De Maere M.Z."/>
            <person name="Ting L."/>
            <person name="Katrib M."/>
            <person name="Ng C."/>
            <person name="Sowers K.R."/>
            <person name="Galperin M.Y."/>
            <person name="Anderson I.J."/>
            <person name="Ivanova N."/>
            <person name="Dalin E."/>
            <person name="Martinez M."/>
            <person name="Lapidus A."/>
            <person name="Hauser L."/>
            <person name="Land M."/>
            <person name="Thomas T."/>
            <person name="Cavicchioli R."/>
        </authorList>
    </citation>
    <scope>NUCLEOTIDE SEQUENCE [LARGE SCALE GENOMIC DNA]</scope>
    <source>
        <strain>DSM 6242 / NBRC 107633 / OCM 468 / ACE-M</strain>
    </source>
</reference>
<evidence type="ECO:0000255" key="1">
    <source>
        <dbReference type="HAMAP-Rule" id="MF_00456"/>
    </source>
</evidence>
<keyword id="KW-0028">Amino-acid biosynthesis</keyword>
<keyword id="KW-0067">ATP-binding</keyword>
<keyword id="KW-0963">Cytoplasm</keyword>
<keyword id="KW-0418">Kinase</keyword>
<keyword id="KW-0547">Nucleotide-binding</keyword>
<keyword id="KW-0641">Proline biosynthesis</keyword>
<keyword id="KW-0808">Transferase</keyword>
<sequence>MTNRKEIIGDAEKIVIKIGTTSISREDGSLNNEFMDTIASQVSELHRAGKQIILVSSGSIGIGIEILDLGCRPKEIPVRQAAAAVGQGVLMQHWTEAFQKYGLNVAQILLTYDSFTNRLTYLNLRNSISTLLSYGVIPIINENDPICVHEIEATLGDNDKLSAMVASKMEADLLILFTDIDGLYDKNPKRHDDAVLLRTVEEITPTIESYGGNPTSMKGVGGMRTKIDAAKICNISGCYMVIANSNVDDGIRRILDGEELGTLFLTNQFVHKNRIRWIILARSSGSIVVDTGAKEALAKRMSLLPSGVLGVAGTFDRGDIVKLECDGVVFGKGITDYTSEELKAIKGKQTNEIADILGYKNYDHVVQKDNIGLFK</sequence>
<proteinExistence type="inferred from homology"/>
<dbReference type="EC" id="2.7.2.11" evidence="1"/>
<dbReference type="EMBL" id="CP000300">
    <property type="protein sequence ID" value="ABE53266.1"/>
    <property type="molecule type" value="Genomic_DNA"/>
</dbReference>
<dbReference type="RefSeq" id="WP_011500401.1">
    <property type="nucleotide sequence ID" value="NC_007955.1"/>
</dbReference>
<dbReference type="SMR" id="Q12TG0"/>
<dbReference type="STRING" id="259564.Mbur_2415"/>
<dbReference type="GeneID" id="3999005"/>
<dbReference type="KEGG" id="mbu:Mbur_2415"/>
<dbReference type="HOGENOM" id="CLU_025400_2_0_2"/>
<dbReference type="OrthoDB" id="142069at2157"/>
<dbReference type="UniPathway" id="UPA00098">
    <property type="reaction ID" value="UER00359"/>
</dbReference>
<dbReference type="Proteomes" id="UP000001979">
    <property type="component" value="Chromosome"/>
</dbReference>
<dbReference type="GO" id="GO:0005829">
    <property type="term" value="C:cytosol"/>
    <property type="evidence" value="ECO:0007669"/>
    <property type="project" value="TreeGrafter"/>
</dbReference>
<dbReference type="GO" id="GO:0005524">
    <property type="term" value="F:ATP binding"/>
    <property type="evidence" value="ECO:0007669"/>
    <property type="project" value="UniProtKB-KW"/>
</dbReference>
<dbReference type="GO" id="GO:0004349">
    <property type="term" value="F:glutamate 5-kinase activity"/>
    <property type="evidence" value="ECO:0007669"/>
    <property type="project" value="UniProtKB-UniRule"/>
</dbReference>
<dbReference type="GO" id="GO:0003723">
    <property type="term" value="F:RNA binding"/>
    <property type="evidence" value="ECO:0007669"/>
    <property type="project" value="InterPro"/>
</dbReference>
<dbReference type="GO" id="GO:0055129">
    <property type="term" value="P:L-proline biosynthetic process"/>
    <property type="evidence" value="ECO:0007669"/>
    <property type="project" value="UniProtKB-UniRule"/>
</dbReference>
<dbReference type="CDD" id="cd04242">
    <property type="entry name" value="AAK_G5K_ProB"/>
    <property type="match status" value="1"/>
</dbReference>
<dbReference type="CDD" id="cd21157">
    <property type="entry name" value="PUA_G5K"/>
    <property type="match status" value="1"/>
</dbReference>
<dbReference type="FunFam" id="3.40.1160.10:FF:000018">
    <property type="entry name" value="Glutamate 5-kinase"/>
    <property type="match status" value="1"/>
</dbReference>
<dbReference type="Gene3D" id="3.40.1160.10">
    <property type="entry name" value="Acetylglutamate kinase-like"/>
    <property type="match status" value="2"/>
</dbReference>
<dbReference type="Gene3D" id="2.30.130.10">
    <property type="entry name" value="PUA domain"/>
    <property type="match status" value="1"/>
</dbReference>
<dbReference type="HAMAP" id="MF_00456">
    <property type="entry name" value="ProB"/>
    <property type="match status" value="1"/>
</dbReference>
<dbReference type="InterPro" id="IPR036393">
    <property type="entry name" value="AceGlu_kinase-like_sf"/>
</dbReference>
<dbReference type="InterPro" id="IPR001048">
    <property type="entry name" value="Asp/Glu/Uridylate_kinase"/>
</dbReference>
<dbReference type="InterPro" id="IPR041739">
    <property type="entry name" value="G5K_ProB"/>
</dbReference>
<dbReference type="InterPro" id="IPR001057">
    <property type="entry name" value="Glu/AcGlu_kinase"/>
</dbReference>
<dbReference type="InterPro" id="IPR011529">
    <property type="entry name" value="Glu_5kinase"/>
</dbReference>
<dbReference type="InterPro" id="IPR005715">
    <property type="entry name" value="Glu_5kinase/COase_Synthase"/>
</dbReference>
<dbReference type="InterPro" id="IPR019797">
    <property type="entry name" value="Glutamate_5-kinase_CS"/>
</dbReference>
<dbReference type="InterPro" id="IPR002478">
    <property type="entry name" value="PUA"/>
</dbReference>
<dbReference type="InterPro" id="IPR015947">
    <property type="entry name" value="PUA-like_sf"/>
</dbReference>
<dbReference type="InterPro" id="IPR036974">
    <property type="entry name" value="PUA_sf"/>
</dbReference>
<dbReference type="NCBIfam" id="TIGR01027">
    <property type="entry name" value="proB"/>
    <property type="match status" value="1"/>
</dbReference>
<dbReference type="PANTHER" id="PTHR43654">
    <property type="entry name" value="GLUTAMATE 5-KINASE"/>
    <property type="match status" value="1"/>
</dbReference>
<dbReference type="PANTHER" id="PTHR43654:SF3">
    <property type="entry name" value="GLUTAMATE 5-KINASE"/>
    <property type="match status" value="1"/>
</dbReference>
<dbReference type="Pfam" id="PF00696">
    <property type="entry name" value="AA_kinase"/>
    <property type="match status" value="1"/>
</dbReference>
<dbReference type="Pfam" id="PF01472">
    <property type="entry name" value="PUA"/>
    <property type="match status" value="1"/>
</dbReference>
<dbReference type="PIRSF" id="PIRSF000729">
    <property type="entry name" value="GK"/>
    <property type="match status" value="1"/>
</dbReference>
<dbReference type="PRINTS" id="PR00474">
    <property type="entry name" value="GLU5KINASE"/>
</dbReference>
<dbReference type="SMART" id="SM00359">
    <property type="entry name" value="PUA"/>
    <property type="match status" value="1"/>
</dbReference>
<dbReference type="SUPFAM" id="SSF53633">
    <property type="entry name" value="Carbamate kinase-like"/>
    <property type="match status" value="1"/>
</dbReference>
<dbReference type="SUPFAM" id="SSF88697">
    <property type="entry name" value="PUA domain-like"/>
    <property type="match status" value="1"/>
</dbReference>
<dbReference type="PROSITE" id="PS00902">
    <property type="entry name" value="GLUTAMATE_5_KINASE"/>
    <property type="match status" value="1"/>
</dbReference>
<dbReference type="PROSITE" id="PS50890">
    <property type="entry name" value="PUA"/>
    <property type="match status" value="1"/>
</dbReference>